<gene>
    <name type="ordered locus">CPn_0713</name>
    <name type="ordered locus">CP_0033</name>
    <name type="ordered locus">CPj0713</name>
    <name type="ordered locus">CpB0740</name>
</gene>
<organism>
    <name type="scientific">Chlamydia pneumoniae</name>
    <name type="common">Chlamydophila pneumoniae</name>
    <dbReference type="NCBI Taxonomy" id="83558"/>
    <lineage>
        <taxon>Bacteria</taxon>
        <taxon>Pseudomonadati</taxon>
        <taxon>Chlamydiota</taxon>
        <taxon>Chlamydiia</taxon>
        <taxon>Chlamydiales</taxon>
        <taxon>Chlamydiaceae</taxon>
        <taxon>Chlamydia/Chlamydophila group</taxon>
        <taxon>Chlamydia</taxon>
    </lineage>
</organism>
<reference key="1">
    <citation type="journal article" date="1999" name="Nat. Genet.">
        <title>Comparative genomes of Chlamydia pneumoniae and C. trachomatis.</title>
        <authorList>
            <person name="Kalman S."/>
            <person name="Mitchell W.P."/>
            <person name="Marathe R."/>
            <person name="Lammel C.J."/>
            <person name="Fan J."/>
            <person name="Hyman R.W."/>
            <person name="Olinger L."/>
            <person name="Grimwood J."/>
            <person name="Davis R.W."/>
            <person name="Stephens R.S."/>
        </authorList>
    </citation>
    <scope>NUCLEOTIDE SEQUENCE [LARGE SCALE GENOMIC DNA]</scope>
    <source>
        <strain>CWL029</strain>
    </source>
</reference>
<reference key="2">
    <citation type="journal article" date="2000" name="Nucleic Acids Res.">
        <title>Genome sequences of Chlamydia trachomatis MoPn and Chlamydia pneumoniae AR39.</title>
        <authorList>
            <person name="Read T.D."/>
            <person name="Brunham R.C."/>
            <person name="Shen C."/>
            <person name="Gill S.R."/>
            <person name="Heidelberg J.F."/>
            <person name="White O."/>
            <person name="Hickey E.K."/>
            <person name="Peterson J.D."/>
            <person name="Utterback T.R."/>
            <person name="Berry K.J."/>
            <person name="Bass S."/>
            <person name="Linher K.D."/>
            <person name="Weidman J.F."/>
            <person name="Khouri H.M."/>
            <person name="Craven B."/>
            <person name="Bowman C."/>
            <person name="Dodson R.J."/>
            <person name="Gwinn M.L."/>
            <person name="Nelson W.C."/>
            <person name="DeBoy R.T."/>
            <person name="Kolonay J.F."/>
            <person name="McClarty G."/>
            <person name="Salzberg S.L."/>
            <person name="Eisen J.A."/>
            <person name="Fraser C.M."/>
        </authorList>
    </citation>
    <scope>NUCLEOTIDE SEQUENCE [LARGE SCALE GENOMIC DNA]</scope>
    <source>
        <strain>AR39</strain>
    </source>
</reference>
<reference key="3">
    <citation type="journal article" date="2000" name="Nucleic Acids Res.">
        <title>Comparison of whole genome sequences of Chlamydia pneumoniae J138 from Japan and CWL029 from USA.</title>
        <authorList>
            <person name="Shirai M."/>
            <person name="Hirakawa H."/>
            <person name="Kimoto M."/>
            <person name="Tabuchi M."/>
            <person name="Kishi F."/>
            <person name="Ouchi K."/>
            <person name="Shiba T."/>
            <person name="Ishii K."/>
            <person name="Hattori M."/>
            <person name="Kuhara S."/>
            <person name="Nakazawa T."/>
        </authorList>
    </citation>
    <scope>NUCLEOTIDE SEQUENCE [LARGE SCALE GENOMIC DNA]</scope>
    <source>
        <strain>J138</strain>
    </source>
</reference>
<reference key="4">
    <citation type="submission" date="2002-05" db="EMBL/GenBank/DDBJ databases">
        <title>The genome sequence of Chlamydia pneumoniae TW183 and comparison with other Chlamydia strains based on whole genome sequence analysis.</title>
        <authorList>
            <person name="Geng M.M."/>
            <person name="Schuhmacher A."/>
            <person name="Muehldorfer I."/>
            <person name="Bensch K.W."/>
            <person name="Schaefer K.P."/>
            <person name="Schneider S."/>
            <person name="Pohl T."/>
            <person name="Essig A."/>
            <person name="Marre R."/>
            <person name="Melchers K."/>
        </authorList>
    </citation>
    <scope>NUCLEOTIDE SEQUENCE [LARGE SCALE GENOMIC DNA]</scope>
    <source>
        <strain>TW-183</strain>
    </source>
</reference>
<dbReference type="EMBL" id="AE001363">
    <property type="protein sequence ID" value="AAD18852.1"/>
    <property type="molecule type" value="Genomic_DNA"/>
</dbReference>
<dbReference type="EMBL" id="AE002161">
    <property type="protein sequence ID" value="AAF37928.1"/>
    <property type="molecule type" value="Genomic_DNA"/>
</dbReference>
<dbReference type="EMBL" id="BA000008">
    <property type="protein sequence ID" value="BAA98920.1"/>
    <property type="molecule type" value="Genomic_DNA"/>
</dbReference>
<dbReference type="EMBL" id="AE009440">
    <property type="protein sequence ID" value="AAP98669.1"/>
    <property type="status" value="ALT_INIT"/>
    <property type="molecule type" value="Genomic_DNA"/>
</dbReference>
<dbReference type="PIR" id="A72047">
    <property type="entry name" value="A72047"/>
</dbReference>
<dbReference type="PIR" id="F86579">
    <property type="entry name" value="F86579"/>
</dbReference>
<dbReference type="RefSeq" id="NP_224909.1">
    <property type="nucleotide sequence ID" value="NC_000922.1"/>
</dbReference>
<dbReference type="RefSeq" id="WP_010883351.1">
    <property type="nucleotide sequence ID" value="NZ_LN847257.1"/>
</dbReference>
<dbReference type="SMR" id="Q9Z7J2"/>
<dbReference type="IntAct" id="Q9Z7J2">
    <property type="interactions" value="2"/>
</dbReference>
<dbReference type="STRING" id="406984.CPK_ORF00116"/>
<dbReference type="GeneID" id="45050768"/>
<dbReference type="KEGG" id="cpa:CP_0033"/>
<dbReference type="KEGG" id="cpj:CPj0713"/>
<dbReference type="KEGG" id="cpn:CPn_0713"/>
<dbReference type="KEGG" id="cpt:CpB0740"/>
<dbReference type="PATRIC" id="fig|115713.3.peg.787"/>
<dbReference type="HOGENOM" id="CLU_156421_0_0_0"/>
<dbReference type="OMA" id="FARHIEC"/>
<dbReference type="OrthoDB" id="21620at2"/>
<dbReference type="Proteomes" id="UP000000583">
    <property type="component" value="Chromosome"/>
</dbReference>
<dbReference type="Proteomes" id="UP000000801">
    <property type="component" value="Chromosome"/>
</dbReference>
<dbReference type="GO" id="GO:0030254">
    <property type="term" value="P:protein secretion by the type III secretion system"/>
    <property type="evidence" value="ECO:0007669"/>
    <property type="project" value="InterPro"/>
</dbReference>
<dbReference type="CDD" id="cd16364">
    <property type="entry name" value="T3SC_I-like"/>
    <property type="match status" value="1"/>
</dbReference>
<dbReference type="Gene3D" id="3.30.1460.10">
    <property type="match status" value="1"/>
</dbReference>
<dbReference type="InterPro" id="IPR010261">
    <property type="entry name" value="Tir_chaperone"/>
</dbReference>
<dbReference type="Pfam" id="PF05932">
    <property type="entry name" value="CesT"/>
    <property type="match status" value="1"/>
</dbReference>
<dbReference type="SUPFAM" id="SSF69635">
    <property type="entry name" value="Type III secretory system chaperone-like"/>
    <property type="match status" value="1"/>
</dbReference>
<comment type="similarity">
    <text evidence="1">Belongs to the chlamydial CPn_0713/CT_663/TC_0034 family.</text>
</comment>
<comment type="sequence caution" evidence="1">
    <conflict type="erroneous initiation">
        <sequence resource="EMBL-CDS" id="AAP98669"/>
    </conflict>
</comment>
<protein>
    <recommendedName>
        <fullName>Protein CPn_0713/CP_0033/CPj0713/CpB0740</fullName>
    </recommendedName>
</protein>
<proteinExistence type="inferred from homology"/>
<feature type="chain" id="PRO_0000218422" description="Protein CPn_0713/CP_0033/CPj0713/CpB0740">
    <location>
        <begin position="1"/>
        <end position="130"/>
    </location>
</feature>
<evidence type="ECO:0000305" key="1"/>
<accession>Q9Z7J2</accession>
<sequence length="130" mass="14173">MLEKLIKNFATYMGITSTLELDADGAYVLPISEVVKVRAQQNADNEIVLSASLGALPPSADTAKLYLQMMIGNLFGRETGGSALGLDSEGNVVMVRRFSGDTTYDDFVRHVESFMNFSETWLSDLGLGKQ</sequence>
<name>Y713_CHLPN</name>